<proteinExistence type="evidence at transcript level"/>
<reference key="1">
    <citation type="journal article" date="1998" name="Science">
        <title>Genome sequence of the nematode C. elegans: a platform for investigating biology.</title>
        <authorList>
            <consortium name="The C. elegans sequencing consortium"/>
        </authorList>
    </citation>
    <scope>NUCLEOTIDE SEQUENCE [LARGE SCALE GENOMIC DNA]</scope>
    <source>
        <strain>Bristol N2</strain>
    </source>
</reference>
<reference key="2">
    <citation type="journal article" date="2003" name="Eur. J. Biochem.">
        <title>The astacin protein family in Caenorhabditis elegans.</title>
        <authorList>
            <person name="Moehrlen F."/>
            <person name="Hutter H."/>
            <person name="Zwilling R."/>
        </authorList>
    </citation>
    <scope>NUCLEOTIDE SEQUENCE [MRNA] OF 33-244</scope>
    <scope>TISSUE SPECIFICITY</scope>
    <source>
        <strain>Bristol N2</strain>
    </source>
</reference>
<comment type="function">
    <text evidence="1 6">Metalloprotease (By similarity). May be involved in digestion.</text>
</comment>
<comment type="cofactor">
    <cofactor evidence="3">
        <name>Zn(2+)</name>
        <dbReference type="ChEBI" id="CHEBI:29105"/>
    </cofactor>
    <text evidence="3">Binds 1 zinc ion per subunit.</text>
</comment>
<comment type="subcellular location">
    <subcellularLocation>
        <location evidence="7">Secreted</location>
    </subcellularLocation>
</comment>
<comment type="tissue specificity">
    <text evidence="5">Digestive tract. Found in the pharynx cells of the procorpus, metacorpus, isthmus and terminal bulb, and in the terminal bulb lumen.</text>
</comment>
<sequence>MMTIQRYSLVFCAIFATCWTASVVNNKQVIDTSVPQTETTLNDADFHSDLHQRYDLQTLGIKVKDDPTIGNYSEGDILLESPKKFVEENNKLGRNAIKQIYRRWPNNEIPYTLSSQYGSYARSVIANAMNEYHTKTCVKFVARDPSKHHDYLWIHPDEGCYSLVGKTGGKQPVSLDSGCIQVGTIVHELMHAVGFFHEQSRQDRDSYIDVVWQNVMNGADDQFEKYNLNVISHLDEPYDYASIMHYGPYAFSGSGKKTLVPKKSGSERMGQRVKFSDIDVRKINKLYNCPGVSGNNNNNNNNQINSNSIVNHPQV</sequence>
<keyword id="KW-1015">Disulfide bond</keyword>
<keyword id="KW-0325">Glycoprotein</keyword>
<keyword id="KW-0378">Hydrolase</keyword>
<keyword id="KW-0479">Metal-binding</keyword>
<keyword id="KW-0482">Metalloprotease</keyword>
<keyword id="KW-0645">Protease</keyword>
<keyword id="KW-1185">Reference proteome</keyword>
<keyword id="KW-0964">Secreted</keyword>
<keyword id="KW-0732">Signal</keyword>
<keyword id="KW-0862">Zinc</keyword>
<keyword id="KW-0865">Zymogen</keyword>
<organism>
    <name type="scientific">Caenorhabditis elegans</name>
    <dbReference type="NCBI Taxonomy" id="6239"/>
    <lineage>
        <taxon>Eukaryota</taxon>
        <taxon>Metazoa</taxon>
        <taxon>Ecdysozoa</taxon>
        <taxon>Nematoda</taxon>
        <taxon>Chromadorea</taxon>
        <taxon>Rhabditida</taxon>
        <taxon>Rhabditina</taxon>
        <taxon>Rhabditomorpha</taxon>
        <taxon>Rhabditoidea</taxon>
        <taxon>Rhabditidae</taxon>
        <taxon>Peloderinae</taxon>
        <taxon>Caenorhabditis</taxon>
    </lineage>
</organism>
<dbReference type="EC" id="3.4.24.-" evidence="1"/>
<dbReference type="EMBL" id="FO080365">
    <property type="protein sequence ID" value="CCD63195.1"/>
    <property type="molecule type" value="Genomic_DNA"/>
</dbReference>
<dbReference type="EMBL" id="AJ561201">
    <property type="protein sequence ID" value="CAD99204.1"/>
    <property type="molecule type" value="mRNA"/>
</dbReference>
<dbReference type="PIR" id="B88482">
    <property type="entry name" value="B88482"/>
</dbReference>
<dbReference type="RefSeq" id="NP_001254939.1">
    <property type="nucleotide sequence ID" value="NM_001268010.3"/>
</dbReference>
<dbReference type="SMR" id="P55112"/>
<dbReference type="FunCoup" id="P55112">
    <property type="interactions" value="2"/>
</dbReference>
<dbReference type="STRING" id="6239.C05D11.6b.1"/>
<dbReference type="MEROPS" id="M12.A19"/>
<dbReference type="GlyCosmos" id="P55112">
    <property type="glycosylation" value="1 site, No reported glycans"/>
</dbReference>
<dbReference type="PaxDb" id="6239-C05D11.6b"/>
<dbReference type="EnsemblMetazoa" id="C05D11.6a.1">
    <property type="protein sequence ID" value="C05D11.6a.1"/>
    <property type="gene ID" value="WBGene00003523"/>
</dbReference>
<dbReference type="EnsemblMetazoa" id="C05D11.6a.2">
    <property type="protein sequence ID" value="C05D11.6a.2"/>
    <property type="gene ID" value="WBGene00003523"/>
</dbReference>
<dbReference type="GeneID" id="182259"/>
<dbReference type="KEGG" id="cel:CELE_C05D11.6"/>
<dbReference type="UCSC" id="C05D11.6">
    <property type="organism name" value="c. elegans"/>
</dbReference>
<dbReference type="AGR" id="WB:WBGene00003523"/>
<dbReference type="CTD" id="182259"/>
<dbReference type="WormBase" id="C05D11.6a">
    <property type="protein sequence ID" value="CE37080"/>
    <property type="gene ID" value="WBGene00003523"/>
    <property type="gene designation" value="nas-4"/>
</dbReference>
<dbReference type="eggNOG" id="KOG3714">
    <property type="taxonomic scope" value="Eukaryota"/>
</dbReference>
<dbReference type="HOGENOM" id="CLU_017286_2_2_1"/>
<dbReference type="InParanoid" id="P55112"/>
<dbReference type="OrthoDB" id="291007at2759"/>
<dbReference type="PhylomeDB" id="P55112"/>
<dbReference type="PRO" id="PR:P55112"/>
<dbReference type="Proteomes" id="UP000001940">
    <property type="component" value="Chromosome III"/>
</dbReference>
<dbReference type="Bgee" id="WBGene00003523">
    <property type="expression patterns" value="Expressed in larva and 3 other cell types or tissues"/>
</dbReference>
<dbReference type="ExpressionAtlas" id="P55112">
    <property type="expression patterns" value="baseline and differential"/>
</dbReference>
<dbReference type="GO" id="GO:0005576">
    <property type="term" value="C:extracellular region"/>
    <property type="evidence" value="ECO:0007669"/>
    <property type="project" value="UniProtKB-SubCell"/>
</dbReference>
<dbReference type="GO" id="GO:0004222">
    <property type="term" value="F:metalloendopeptidase activity"/>
    <property type="evidence" value="ECO:0000318"/>
    <property type="project" value="GO_Central"/>
</dbReference>
<dbReference type="GO" id="GO:0008270">
    <property type="term" value="F:zinc ion binding"/>
    <property type="evidence" value="ECO:0007669"/>
    <property type="project" value="InterPro"/>
</dbReference>
<dbReference type="GO" id="GO:0006508">
    <property type="term" value="P:proteolysis"/>
    <property type="evidence" value="ECO:0007669"/>
    <property type="project" value="UniProtKB-KW"/>
</dbReference>
<dbReference type="CDD" id="cd04280">
    <property type="entry name" value="ZnMc_astacin_like"/>
    <property type="match status" value="1"/>
</dbReference>
<dbReference type="FunFam" id="3.40.390.10:FF:000015">
    <property type="entry name" value="Meprin A subunit"/>
    <property type="match status" value="1"/>
</dbReference>
<dbReference type="Gene3D" id="3.40.390.10">
    <property type="entry name" value="Collagenase (Catalytic Domain)"/>
    <property type="match status" value="1"/>
</dbReference>
<dbReference type="InterPro" id="IPR034035">
    <property type="entry name" value="Astacin-like_dom"/>
</dbReference>
<dbReference type="InterPro" id="IPR024079">
    <property type="entry name" value="MetalloPept_cat_dom_sf"/>
</dbReference>
<dbReference type="InterPro" id="IPR001506">
    <property type="entry name" value="Peptidase_M12A"/>
</dbReference>
<dbReference type="InterPro" id="IPR006026">
    <property type="entry name" value="Peptidase_Metallo"/>
</dbReference>
<dbReference type="PANTHER" id="PTHR10127">
    <property type="entry name" value="DISCOIDIN, CUB, EGF, LAMININ , AND ZINC METALLOPROTEASE DOMAIN CONTAINING"/>
    <property type="match status" value="1"/>
</dbReference>
<dbReference type="PANTHER" id="PTHR10127:SF818">
    <property type="entry name" value="ZINC METALLOPROTEINASE NAS-4"/>
    <property type="match status" value="1"/>
</dbReference>
<dbReference type="Pfam" id="PF01400">
    <property type="entry name" value="Astacin"/>
    <property type="match status" value="1"/>
</dbReference>
<dbReference type="PRINTS" id="PR00480">
    <property type="entry name" value="ASTACIN"/>
</dbReference>
<dbReference type="SMART" id="SM00235">
    <property type="entry name" value="ZnMc"/>
    <property type="match status" value="1"/>
</dbReference>
<dbReference type="SUPFAM" id="SSF55486">
    <property type="entry name" value="Metalloproteases ('zincins'), catalytic domain"/>
    <property type="match status" value="1"/>
</dbReference>
<dbReference type="PROSITE" id="PS51864">
    <property type="entry name" value="ASTACIN"/>
    <property type="match status" value="1"/>
</dbReference>
<dbReference type="PROSITE" id="PS00142">
    <property type="entry name" value="ZINC_PROTEASE"/>
    <property type="match status" value="1"/>
</dbReference>
<feature type="signal peptide" evidence="2">
    <location>
        <begin position="1"/>
        <end position="20"/>
    </location>
</feature>
<feature type="propeptide" id="PRO_0000442652" evidence="7">
    <location>
        <begin position="21"/>
        <end status="unknown"/>
    </location>
</feature>
<feature type="chain" id="PRO_0000028909" description="Zinc metalloproteinase nas-4">
    <location>
        <begin status="unknown"/>
        <end position="315"/>
    </location>
</feature>
<feature type="domain" description="Peptidase M12A" evidence="3">
    <location>
        <begin position="95"/>
        <end position="290"/>
    </location>
</feature>
<feature type="region of interest" description="Disordered" evidence="4">
    <location>
        <begin position="291"/>
        <end position="315"/>
    </location>
</feature>
<feature type="active site" evidence="3">
    <location>
        <position position="188"/>
    </location>
</feature>
<feature type="binding site" evidence="3">
    <location>
        <position position="187"/>
    </location>
    <ligand>
        <name>Zn(2+)</name>
        <dbReference type="ChEBI" id="CHEBI:29105"/>
        <note>catalytic</note>
    </ligand>
</feature>
<feature type="binding site" evidence="3">
    <location>
        <position position="191"/>
    </location>
    <ligand>
        <name>Zn(2+)</name>
        <dbReference type="ChEBI" id="CHEBI:29105"/>
        <note>catalytic</note>
    </ligand>
</feature>
<feature type="binding site" evidence="3">
    <location>
        <position position="197"/>
    </location>
    <ligand>
        <name>Zn(2+)</name>
        <dbReference type="ChEBI" id="CHEBI:29105"/>
        <note>catalytic</note>
    </ligand>
</feature>
<feature type="glycosylation site" description="N-linked (GlcNAc...) asparagine" evidence="2">
    <location>
        <position position="71"/>
    </location>
</feature>
<feature type="disulfide bond" evidence="3">
    <location>
        <begin position="137"/>
        <end position="289"/>
    </location>
</feature>
<feature type="disulfide bond" evidence="3">
    <location>
        <begin position="160"/>
        <end position="179"/>
    </location>
</feature>
<gene>
    <name type="primary">nas-4</name>
    <name type="ORF">C05D11.6</name>
</gene>
<accession>P55112</accession>
<accession>Q7Z0N7</accession>
<protein>
    <recommendedName>
        <fullName>Zinc metalloproteinase nas-4</fullName>
        <ecNumber evidence="1">3.4.24.-</ecNumber>
    </recommendedName>
    <alternativeName>
        <fullName>Nematode astacin 4</fullName>
    </alternativeName>
</protein>
<name>NAS4_CAEEL</name>
<evidence type="ECO:0000250" key="1">
    <source>
        <dbReference type="UniProtKB" id="A8Q2D1"/>
    </source>
</evidence>
<evidence type="ECO:0000255" key="2"/>
<evidence type="ECO:0000255" key="3">
    <source>
        <dbReference type="PROSITE-ProRule" id="PRU01211"/>
    </source>
</evidence>
<evidence type="ECO:0000256" key="4">
    <source>
        <dbReference type="SAM" id="MobiDB-lite"/>
    </source>
</evidence>
<evidence type="ECO:0000269" key="5">
    <source>
    </source>
</evidence>
<evidence type="ECO:0000303" key="6">
    <source>
    </source>
</evidence>
<evidence type="ECO:0000305" key="7"/>